<name>RS17_STAA3</name>
<feature type="chain" id="PRO_0000233569" description="Small ribosomal subunit protein uS17">
    <location>
        <begin position="1"/>
        <end position="87"/>
    </location>
</feature>
<comment type="function">
    <text evidence="1">One of the primary rRNA binding proteins, it binds specifically to the 5'-end of 16S ribosomal RNA.</text>
</comment>
<comment type="subunit">
    <text evidence="1">Part of the 30S ribosomal subunit.</text>
</comment>
<comment type="similarity">
    <text evidence="1">Belongs to the universal ribosomal protein uS17 family.</text>
</comment>
<evidence type="ECO:0000255" key="1">
    <source>
        <dbReference type="HAMAP-Rule" id="MF_01345"/>
    </source>
</evidence>
<evidence type="ECO:0000305" key="2"/>
<proteinExistence type="inferred from homology"/>
<organism>
    <name type="scientific">Staphylococcus aureus (strain USA300)</name>
    <dbReference type="NCBI Taxonomy" id="367830"/>
    <lineage>
        <taxon>Bacteria</taxon>
        <taxon>Bacillati</taxon>
        <taxon>Bacillota</taxon>
        <taxon>Bacilli</taxon>
        <taxon>Bacillales</taxon>
        <taxon>Staphylococcaceae</taxon>
        <taxon>Staphylococcus</taxon>
    </lineage>
</organism>
<keyword id="KW-0687">Ribonucleoprotein</keyword>
<keyword id="KW-0689">Ribosomal protein</keyword>
<keyword id="KW-0694">RNA-binding</keyword>
<keyword id="KW-0699">rRNA-binding</keyword>
<dbReference type="EMBL" id="CP000255">
    <property type="protein sequence ID" value="ABD21043.1"/>
    <property type="molecule type" value="Genomic_DNA"/>
</dbReference>
<dbReference type="RefSeq" id="WP_000004086.1">
    <property type="nucleotide sequence ID" value="NZ_CP027476.1"/>
</dbReference>
<dbReference type="SMR" id="Q2FEP8"/>
<dbReference type="GeneID" id="98346553"/>
<dbReference type="KEGG" id="saa:SAUSA300_2195"/>
<dbReference type="HOGENOM" id="CLU_073626_1_0_9"/>
<dbReference type="OMA" id="HPMYGKF"/>
<dbReference type="Proteomes" id="UP000001939">
    <property type="component" value="Chromosome"/>
</dbReference>
<dbReference type="GO" id="GO:0022627">
    <property type="term" value="C:cytosolic small ribosomal subunit"/>
    <property type="evidence" value="ECO:0007669"/>
    <property type="project" value="TreeGrafter"/>
</dbReference>
<dbReference type="GO" id="GO:0019843">
    <property type="term" value="F:rRNA binding"/>
    <property type="evidence" value="ECO:0007669"/>
    <property type="project" value="UniProtKB-UniRule"/>
</dbReference>
<dbReference type="GO" id="GO:0003735">
    <property type="term" value="F:structural constituent of ribosome"/>
    <property type="evidence" value="ECO:0007669"/>
    <property type="project" value="InterPro"/>
</dbReference>
<dbReference type="GO" id="GO:0006412">
    <property type="term" value="P:translation"/>
    <property type="evidence" value="ECO:0007669"/>
    <property type="project" value="UniProtKB-UniRule"/>
</dbReference>
<dbReference type="CDD" id="cd00364">
    <property type="entry name" value="Ribosomal_uS17"/>
    <property type="match status" value="1"/>
</dbReference>
<dbReference type="FunFam" id="2.40.50.140:FF:000026">
    <property type="entry name" value="30S ribosomal protein S17"/>
    <property type="match status" value="1"/>
</dbReference>
<dbReference type="Gene3D" id="2.40.50.140">
    <property type="entry name" value="Nucleic acid-binding proteins"/>
    <property type="match status" value="1"/>
</dbReference>
<dbReference type="HAMAP" id="MF_01345_B">
    <property type="entry name" value="Ribosomal_uS17_B"/>
    <property type="match status" value="1"/>
</dbReference>
<dbReference type="InterPro" id="IPR012340">
    <property type="entry name" value="NA-bd_OB-fold"/>
</dbReference>
<dbReference type="InterPro" id="IPR000266">
    <property type="entry name" value="Ribosomal_uS17"/>
</dbReference>
<dbReference type="InterPro" id="IPR019984">
    <property type="entry name" value="Ribosomal_uS17_bact/chlr"/>
</dbReference>
<dbReference type="InterPro" id="IPR019979">
    <property type="entry name" value="Ribosomal_uS17_CS"/>
</dbReference>
<dbReference type="NCBIfam" id="NF004123">
    <property type="entry name" value="PRK05610.1"/>
    <property type="match status" value="1"/>
</dbReference>
<dbReference type="NCBIfam" id="TIGR03635">
    <property type="entry name" value="uS17_bact"/>
    <property type="match status" value="1"/>
</dbReference>
<dbReference type="PANTHER" id="PTHR10744">
    <property type="entry name" value="40S RIBOSOMAL PROTEIN S11 FAMILY MEMBER"/>
    <property type="match status" value="1"/>
</dbReference>
<dbReference type="PANTHER" id="PTHR10744:SF1">
    <property type="entry name" value="SMALL RIBOSOMAL SUBUNIT PROTEIN US17M"/>
    <property type="match status" value="1"/>
</dbReference>
<dbReference type="Pfam" id="PF00366">
    <property type="entry name" value="Ribosomal_S17"/>
    <property type="match status" value="1"/>
</dbReference>
<dbReference type="PRINTS" id="PR00973">
    <property type="entry name" value="RIBOSOMALS17"/>
</dbReference>
<dbReference type="SUPFAM" id="SSF50249">
    <property type="entry name" value="Nucleic acid-binding proteins"/>
    <property type="match status" value="1"/>
</dbReference>
<dbReference type="PROSITE" id="PS00056">
    <property type="entry name" value="RIBOSOMAL_S17"/>
    <property type="match status" value="1"/>
</dbReference>
<protein>
    <recommendedName>
        <fullName evidence="1">Small ribosomal subunit protein uS17</fullName>
    </recommendedName>
    <alternativeName>
        <fullName evidence="2">30S ribosomal protein S17</fullName>
    </alternativeName>
</protein>
<reference key="1">
    <citation type="journal article" date="2006" name="Lancet">
        <title>Complete genome sequence of USA300, an epidemic clone of community-acquired meticillin-resistant Staphylococcus aureus.</title>
        <authorList>
            <person name="Diep B.A."/>
            <person name="Gill S.R."/>
            <person name="Chang R.F."/>
            <person name="Phan T.H."/>
            <person name="Chen J.H."/>
            <person name="Davidson M.G."/>
            <person name="Lin F."/>
            <person name="Lin J."/>
            <person name="Carleton H.A."/>
            <person name="Mongodin E.F."/>
            <person name="Sensabaugh G.F."/>
            <person name="Perdreau-Remington F."/>
        </authorList>
    </citation>
    <scope>NUCLEOTIDE SEQUENCE [LARGE SCALE GENOMIC DNA]</scope>
    <source>
        <strain>USA300</strain>
    </source>
</reference>
<accession>Q2FEP8</accession>
<gene>
    <name evidence="1" type="primary">rpsQ</name>
    <name type="ordered locus">SAUSA300_2195</name>
</gene>
<sequence length="87" mass="10175">MSERNDRKVYVGKVVSDKMDKTITVLVETYKTHKLYGKRVKYSKKYKTHDENNSAKLGDIVKIQETRPLSATKRFRLVEIVEESVII</sequence>